<organism>
    <name type="scientific">Salmonella paratyphi A (strain ATCC 9150 / SARB42)</name>
    <dbReference type="NCBI Taxonomy" id="295319"/>
    <lineage>
        <taxon>Bacteria</taxon>
        <taxon>Pseudomonadati</taxon>
        <taxon>Pseudomonadota</taxon>
        <taxon>Gammaproteobacteria</taxon>
        <taxon>Enterobacterales</taxon>
        <taxon>Enterobacteriaceae</taxon>
        <taxon>Salmonella</taxon>
    </lineage>
</organism>
<reference key="1">
    <citation type="journal article" date="2004" name="Nat. Genet.">
        <title>Comparison of genome degradation in Paratyphi A and Typhi, human-restricted serovars of Salmonella enterica that cause typhoid.</title>
        <authorList>
            <person name="McClelland M."/>
            <person name="Sanderson K.E."/>
            <person name="Clifton S.W."/>
            <person name="Latreille P."/>
            <person name="Porwollik S."/>
            <person name="Sabo A."/>
            <person name="Meyer R."/>
            <person name="Bieri T."/>
            <person name="Ozersky P."/>
            <person name="McLellan M."/>
            <person name="Harkins C.R."/>
            <person name="Wang C."/>
            <person name="Nguyen C."/>
            <person name="Berghoff A."/>
            <person name="Elliott G."/>
            <person name="Kohlberg S."/>
            <person name="Strong C."/>
            <person name="Du F."/>
            <person name="Carter J."/>
            <person name="Kremizki C."/>
            <person name="Layman D."/>
            <person name="Leonard S."/>
            <person name="Sun H."/>
            <person name="Fulton L."/>
            <person name="Nash W."/>
            <person name="Miner T."/>
            <person name="Minx P."/>
            <person name="Delehaunty K."/>
            <person name="Fronick C."/>
            <person name="Magrini V."/>
            <person name="Nhan M."/>
            <person name="Warren W."/>
            <person name="Florea L."/>
            <person name="Spieth J."/>
            <person name="Wilson R.K."/>
        </authorList>
    </citation>
    <scope>NUCLEOTIDE SEQUENCE [LARGE SCALE GENOMIC DNA]</scope>
    <source>
        <strain>ATCC 9150 / SARB42</strain>
    </source>
</reference>
<gene>
    <name evidence="1" type="primary">patD</name>
    <name type="ordered locus">SPA1271</name>
</gene>
<keyword id="KW-0520">NAD</keyword>
<keyword id="KW-0560">Oxidoreductase</keyword>
<protein>
    <recommendedName>
        <fullName evidence="1">Gamma-aminobutyraldehyde dehydrogenase</fullName>
        <shortName evidence="1">ABALDH</shortName>
        <ecNumber evidence="1">1.2.1.19</ecNumber>
    </recommendedName>
    <alternativeName>
        <fullName evidence="1">1-pyrroline dehydrogenase</fullName>
    </alternativeName>
    <alternativeName>
        <fullName evidence="1">4-aminobutanal dehydrogenase</fullName>
    </alternativeName>
    <alternativeName>
        <fullName evidence="1">5-aminopentanal dehydrogenase</fullName>
        <ecNumber evidence="1">1.2.1.-</ecNumber>
    </alternativeName>
</protein>
<sequence>MQYQLLINGVLVDGEGERQSVYNPATGEVILEIAEASPAQIDAAVQAAVNTFAEWGQTTPKARAECLLKLADSIEQNALEFARLESQNCGKPLHCVINDEIPAIVDVFRFFAGAARCLSGLAAGEYLEGHTSMIRRDPIGVVASIAPWNYPLMMAAWKLAPALAAGNCVVIKPSEITPLTALKLAALAKDIFPPGVLNVLFGRGQTVGDVLTGHEKVRMVSLTGSIATGEHILRHTAPAIKRTHMELGGKAPVIVFDDADLDAVAQGVRTFGFYNAGQDCTAACRIYAQRGIYDALVEKLGNAVSSLKMGAPEDESTELGPLSSLAHLKRVTAAVEEAKALSHIRVITGGSQTEGKGYYFAPTLLADAKQEDAIVQREVFGPVVSITVFDDEDQVLRWGNDSRYGLASSVWTQDVGRAHRLSARLQYGCTWINTHFMLVSEMPHGGQKQSGYGKDMSLYGLEDYTLVRHIMVKH</sequence>
<dbReference type="EC" id="1.2.1.19" evidence="1"/>
<dbReference type="EC" id="1.2.1.-" evidence="1"/>
<dbReference type="EMBL" id="CP000026">
    <property type="protein sequence ID" value="AAV77220.1"/>
    <property type="status" value="ALT_INIT"/>
    <property type="molecule type" value="Genomic_DNA"/>
</dbReference>
<dbReference type="SMR" id="Q5PHV8"/>
<dbReference type="KEGG" id="spt:SPA1271"/>
<dbReference type="HOGENOM" id="CLU_005391_1_0_6"/>
<dbReference type="UniPathway" id="UPA00188">
    <property type="reaction ID" value="UER00292"/>
</dbReference>
<dbReference type="Proteomes" id="UP000008185">
    <property type="component" value="Chromosome"/>
</dbReference>
<dbReference type="GO" id="GO:0019145">
    <property type="term" value="F:aminobutyraldehyde dehydrogenase (NAD+) activity"/>
    <property type="evidence" value="ECO:0007669"/>
    <property type="project" value="UniProtKB-UniRule"/>
</dbReference>
<dbReference type="GO" id="GO:0051287">
    <property type="term" value="F:NAD binding"/>
    <property type="evidence" value="ECO:0007669"/>
    <property type="project" value="UniProtKB-UniRule"/>
</dbReference>
<dbReference type="GO" id="GO:0019477">
    <property type="term" value="P:L-lysine catabolic process"/>
    <property type="evidence" value="ECO:0007669"/>
    <property type="project" value="UniProtKB-UniRule"/>
</dbReference>
<dbReference type="GO" id="GO:0009447">
    <property type="term" value="P:putrescine catabolic process"/>
    <property type="evidence" value="ECO:0007669"/>
    <property type="project" value="UniProtKB-UniRule"/>
</dbReference>
<dbReference type="CDD" id="cd07092">
    <property type="entry name" value="ALDH_ABALDH-YdcW"/>
    <property type="match status" value="1"/>
</dbReference>
<dbReference type="FunFam" id="3.40.605.10:FF:000001">
    <property type="entry name" value="Aldehyde dehydrogenase 1"/>
    <property type="match status" value="1"/>
</dbReference>
<dbReference type="FunFam" id="3.40.309.10:FF:000010">
    <property type="entry name" value="Gamma-aminobutyraldehyde dehydrogenase"/>
    <property type="match status" value="1"/>
</dbReference>
<dbReference type="Gene3D" id="3.40.605.10">
    <property type="entry name" value="Aldehyde Dehydrogenase, Chain A, domain 1"/>
    <property type="match status" value="1"/>
</dbReference>
<dbReference type="Gene3D" id="3.40.309.10">
    <property type="entry name" value="Aldehyde Dehydrogenase, Chain A, domain 2"/>
    <property type="match status" value="1"/>
</dbReference>
<dbReference type="HAMAP" id="MF_01275">
    <property type="entry name" value="Aldedh_Prr"/>
    <property type="match status" value="1"/>
</dbReference>
<dbReference type="InterPro" id="IPR016161">
    <property type="entry name" value="Ald_DH/histidinol_DH"/>
</dbReference>
<dbReference type="InterPro" id="IPR016163">
    <property type="entry name" value="Ald_DH_C"/>
</dbReference>
<dbReference type="InterPro" id="IPR029510">
    <property type="entry name" value="Ald_DH_CS_GLU"/>
</dbReference>
<dbReference type="InterPro" id="IPR016162">
    <property type="entry name" value="Ald_DH_N"/>
</dbReference>
<dbReference type="InterPro" id="IPR015590">
    <property type="entry name" value="Aldehyde_DH_dom"/>
</dbReference>
<dbReference type="InterPro" id="IPR015657">
    <property type="entry name" value="Aminobutyraldehyde_DH"/>
</dbReference>
<dbReference type="InterPro" id="IPR017749">
    <property type="entry name" value="PatD"/>
</dbReference>
<dbReference type="NCBIfam" id="TIGR03374">
    <property type="entry name" value="ABALDH"/>
    <property type="match status" value="1"/>
</dbReference>
<dbReference type="NCBIfam" id="NF010000">
    <property type="entry name" value="PRK13473.1"/>
    <property type="match status" value="1"/>
</dbReference>
<dbReference type="PANTHER" id="PTHR11699">
    <property type="entry name" value="ALDEHYDE DEHYDROGENASE-RELATED"/>
    <property type="match status" value="1"/>
</dbReference>
<dbReference type="Pfam" id="PF00171">
    <property type="entry name" value="Aldedh"/>
    <property type="match status" value="1"/>
</dbReference>
<dbReference type="SUPFAM" id="SSF53720">
    <property type="entry name" value="ALDH-like"/>
    <property type="match status" value="1"/>
</dbReference>
<dbReference type="PROSITE" id="PS00687">
    <property type="entry name" value="ALDEHYDE_DEHYDR_GLU"/>
    <property type="match status" value="1"/>
</dbReference>
<evidence type="ECO:0000255" key="1">
    <source>
        <dbReference type="HAMAP-Rule" id="MF_01275"/>
    </source>
</evidence>
<evidence type="ECO:0000305" key="2"/>
<feature type="chain" id="PRO_0000269698" description="Gamma-aminobutyraldehyde dehydrogenase">
    <location>
        <begin position="1"/>
        <end position="474"/>
    </location>
</feature>
<feature type="active site" evidence="1">
    <location>
        <position position="246"/>
    </location>
</feature>
<feature type="active site" description="Nucleophile" evidence="1">
    <location>
        <position position="280"/>
    </location>
</feature>
<feature type="binding site" evidence="1">
    <location>
        <begin position="146"/>
        <end position="148"/>
    </location>
    <ligand>
        <name>NAD(+)</name>
        <dbReference type="ChEBI" id="CHEBI:57540"/>
    </ligand>
</feature>
<feature type="binding site" evidence="1">
    <location>
        <begin position="172"/>
        <end position="175"/>
    </location>
    <ligand>
        <name>NAD(+)</name>
        <dbReference type="ChEBI" id="CHEBI:57540"/>
    </ligand>
</feature>
<feature type="binding site" evidence="1">
    <location>
        <position position="209"/>
    </location>
    <ligand>
        <name>NAD(+)</name>
        <dbReference type="ChEBI" id="CHEBI:57540"/>
    </ligand>
</feature>
<feature type="binding site" evidence="1">
    <location>
        <begin position="225"/>
        <end position="228"/>
    </location>
    <ligand>
        <name>NAD(+)</name>
        <dbReference type="ChEBI" id="CHEBI:57540"/>
    </ligand>
</feature>
<feature type="binding site" evidence="1">
    <location>
        <position position="280"/>
    </location>
    <ligand>
        <name>NAD(+)</name>
        <dbReference type="ChEBI" id="CHEBI:57540"/>
    </ligand>
</feature>
<accession>Q5PHV8</accession>
<name>ABDH_SALPA</name>
<comment type="function">
    <text evidence="1">Catalyzes the oxidation 4-aminobutanal (gamma-aminobutyraldehyde) to 4-aminobutanoate (gamma-aminobutyrate or GABA). This is the second step in one of two pathways for putrescine degradation, where putrescine is converted into 4-aminobutanoate via 4-aminobutanal. Also functions as a 5-aminopentanal dehydrogenase in a a L-lysine degradation pathway to succinate that proceeds via cadaverine, glutarate and L-2-hydroxyglutarate.</text>
</comment>
<comment type="catalytic activity">
    <reaction evidence="1">
        <text>4-aminobutanal + NAD(+) + H2O = 4-aminobutanoate + NADH + 2 H(+)</text>
        <dbReference type="Rhea" id="RHEA:19105"/>
        <dbReference type="ChEBI" id="CHEBI:15377"/>
        <dbReference type="ChEBI" id="CHEBI:15378"/>
        <dbReference type="ChEBI" id="CHEBI:57540"/>
        <dbReference type="ChEBI" id="CHEBI:57945"/>
        <dbReference type="ChEBI" id="CHEBI:58264"/>
        <dbReference type="ChEBI" id="CHEBI:59888"/>
        <dbReference type="EC" id="1.2.1.19"/>
    </reaction>
    <physiologicalReaction direction="left-to-right" evidence="1">
        <dbReference type="Rhea" id="RHEA:19106"/>
    </physiologicalReaction>
</comment>
<comment type="catalytic activity">
    <reaction evidence="1">
        <text>5-aminopentanal + NAD(+) + H2O = 5-aminopentanoate + NADH + 2 H(+)</text>
        <dbReference type="Rhea" id="RHEA:61632"/>
        <dbReference type="ChEBI" id="CHEBI:15377"/>
        <dbReference type="ChEBI" id="CHEBI:15378"/>
        <dbReference type="ChEBI" id="CHEBI:57540"/>
        <dbReference type="ChEBI" id="CHEBI:57945"/>
        <dbReference type="ChEBI" id="CHEBI:144896"/>
        <dbReference type="ChEBI" id="CHEBI:356010"/>
    </reaction>
    <physiologicalReaction direction="left-to-right" evidence="1">
        <dbReference type="Rhea" id="RHEA:61633"/>
    </physiologicalReaction>
</comment>
<comment type="pathway">
    <text evidence="1">Amine and polyamine degradation; putrescine degradation; 4-aminobutanoate from 4-aminobutanal: step 1/1.</text>
</comment>
<comment type="pathway">
    <text evidence="1">Amino-acid degradation.</text>
</comment>
<comment type="subunit">
    <text evidence="1">Homotetramer.</text>
</comment>
<comment type="miscellaneous">
    <text evidence="1">4-aminobutanal can spontaneously cyclize to 1-pyrroline, and 5-aminopentanal to 1-piperideine.</text>
</comment>
<comment type="similarity">
    <text evidence="1">Belongs to the aldehyde dehydrogenase family. Gamma-aminobutyraldehyde dehydrogenase subfamily.</text>
</comment>
<comment type="sequence caution" evidence="2">
    <conflict type="erroneous initiation">
        <sequence resource="EMBL-CDS" id="AAV77220"/>
    </conflict>
</comment>
<proteinExistence type="inferred from homology"/>